<accession>B8D9W6</accession>
<keyword id="KW-0004">4Fe-4S</keyword>
<keyword id="KW-0408">Iron</keyword>
<keyword id="KW-0411">Iron-sulfur</keyword>
<keyword id="KW-0479">Metal-binding</keyword>
<proteinExistence type="inferred from homology"/>
<gene>
    <name evidence="1" type="primary">nfuA</name>
    <name type="ordered locus">BUAP5A_537</name>
</gene>
<dbReference type="EMBL" id="CP001161">
    <property type="protein sequence ID" value="ACL30887.1"/>
    <property type="molecule type" value="Genomic_DNA"/>
</dbReference>
<dbReference type="RefSeq" id="WP_009874494.1">
    <property type="nucleotide sequence ID" value="NC_011833.1"/>
</dbReference>
<dbReference type="SMR" id="B8D9W6"/>
<dbReference type="KEGG" id="bap:BUAP5A_537"/>
<dbReference type="HOGENOM" id="CLU_094569_0_0_6"/>
<dbReference type="OrthoDB" id="9785450at2"/>
<dbReference type="Proteomes" id="UP000006904">
    <property type="component" value="Chromosome"/>
</dbReference>
<dbReference type="GO" id="GO:0051539">
    <property type="term" value="F:4 iron, 4 sulfur cluster binding"/>
    <property type="evidence" value="ECO:0007669"/>
    <property type="project" value="UniProtKB-UniRule"/>
</dbReference>
<dbReference type="GO" id="GO:0005506">
    <property type="term" value="F:iron ion binding"/>
    <property type="evidence" value="ECO:0007669"/>
    <property type="project" value="InterPro"/>
</dbReference>
<dbReference type="GO" id="GO:0016226">
    <property type="term" value="P:iron-sulfur cluster assembly"/>
    <property type="evidence" value="ECO:0007669"/>
    <property type="project" value="UniProtKB-UniRule"/>
</dbReference>
<dbReference type="GO" id="GO:0051604">
    <property type="term" value="P:protein maturation"/>
    <property type="evidence" value="ECO:0007669"/>
    <property type="project" value="UniProtKB-UniRule"/>
</dbReference>
<dbReference type="Gene3D" id="3.30.300.130">
    <property type="entry name" value="Fe-S cluster assembly (FSCA)"/>
    <property type="match status" value="1"/>
</dbReference>
<dbReference type="Gene3D" id="2.60.300.12">
    <property type="entry name" value="HesB-like domain"/>
    <property type="match status" value="1"/>
</dbReference>
<dbReference type="HAMAP" id="MF_01637">
    <property type="entry name" value="Fe_S_biogen_NfuA"/>
    <property type="match status" value="1"/>
</dbReference>
<dbReference type="InterPro" id="IPR017726">
    <property type="entry name" value="Fe/S_biogenesis_protein_NfuA"/>
</dbReference>
<dbReference type="InterPro" id="IPR000361">
    <property type="entry name" value="FeS_biogenesis"/>
</dbReference>
<dbReference type="InterPro" id="IPR034904">
    <property type="entry name" value="FSCA_dom_sf"/>
</dbReference>
<dbReference type="InterPro" id="IPR035903">
    <property type="entry name" value="HesB-like_dom_sf"/>
</dbReference>
<dbReference type="InterPro" id="IPR001075">
    <property type="entry name" value="NIF_FeS_clus_asmbl_NifU_C"/>
</dbReference>
<dbReference type="Pfam" id="PF01521">
    <property type="entry name" value="Fe-S_biosyn"/>
    <property type="match status" value="1"/>
</dbReference>
<dbReference type="Pfam" id="PF01106">
    <property type="entry name" value="NifU"/>
    <property type="match status" value="1"/>
</dbReference>
<dbReference type="SUPFAM" id="SSF117916">
    <property type="entry name" value="Fe-S cluster assembly (FSCA) domain-like"/>
    <property type="match status" value="1"/>
</dbReference>
<dbReference type="SUPFAM" id="SSF89360">
    <property type="entry name" value="HesB-like domain"/>
    <property type="match status" value="1"/>
</dbReference>
<sequence>MINISKKAQEHFTSLLSNEPENTQIRVFIVNPGTPNAECGVAFCPENEIELSDIQLKYDGFFVYVNKDTISYLKNSVIDLVTDKIGSQLTLKAPYAKNNFSKKVSSSLEEKVKCFLNLEINPQLSMHGGRVELMKIDENGIAAIQFSGGCNGCSMIGSTLKETVEKKLLSSFSEIKKVYDETHHLHGQHSFY</sequence>
<feature type="chain" id="PRO_1000186739" description="Fe/S biogenesis protein NfuA">
    <location>
        <begin position="1"/>
        <end position="192"/>
    </location>
</feature>
<feature type="binding site" evidence="1">
    <location>
        <position position="150"/>
    </location>
    <ligand>
        <name>[4Fe-4S] cluster</name>
        <dbReference type="ChEBI" id="CHEBI:49883"/>
    </ligand>
</feature>
<feature type="binding site" evidence="1">
    <location>
        <position position="153"/>
    </location>
    <ligand>
        <name>[4Fe-4S] cluster</name>
        <dbReference type="ChEBI" id="CHEBI:49883"/>
    </ligand>
</feature>
<evidence type="ECO:0000255" key="1">
    <source>
        <dbReference type="HAMAP-Rule" id="MF_01637"/>
    </source>
</evidence>
<organism>
    <name type="scientific">Buchnera aphidicola subsp. Acyrthosiphon pisum (strain 5A)</name>
    <dbReference type="NCBI Taxonomy" id="563178"/>
    <lineage>
        <taxon>Bacteria</taxon>
        <taxon>Pseudomonadati</taxon>
        <taxon>Pseudomonadota</taxon>
        <taxon>Gammaproteobacteria</taxon>
        <taxon>Enterobacterales</taxon>
        <taxon>Erwiniaceae</taxon>
        <taxon>Buchnera</taxon>
    </lineage>
</organism>
<reference key="1">
    <citation type="journal article" date="2009" name="Science">
        <title>The dynamics and time scale of ongoing genomic erosion in symbiotic bacteria.</title>
        <authorList>
            <person name="Moran N.A."/>
            <person name="McLaughlin H.J."/>
            <person name="Sorek R."/>
        </authorList>
    </citation>
    <scope>NUCLEOTIDE SEQUENCE [LARGE SCALE GENOMIC DNA]</scope>
    <source>
        <strain>5A</strain>
    </source>
</reference>
<comment type="function">
    <text evidence="1">Involved in iron-sulfur cluster biogenesis. Binds a 4Fe-4S cluster, can transfer this cluster to apoproteins, and thereby intervenes in the maturation of Fe/S proteins. Could also act as a scaffold/chaperone for damaged Fe/S proteins.</text>
</comment>
<comment type="cofactor">
    <cofactor evidence="1">
        <name>[4Fe-4S] cluster</name>
        <dbReference type="ChEBI" id="CHEBI:49883"/>
    </cofactor>
    <text evidence="1">Binds 1 [4Fe-4S] cluster per subunit. The cluster is presumably bound at the interface of two monomers.</text>
</comment>
<comment type="subunit">
    <text evidence="1">Homodimer.</text>
</comment>
<comment type="similarity">
    <text evidence="1">Belongs to the NfuA family.</text>
</comment>
<protein>
    <recommendedName>
        <fullName evidence="1">Fe/S biogenesis protein NfuA</fullName>
    </recommendedName>
</protein>
<name>NFUA_BUCA5</name>